<sequence>MEPAAGGPGPLIVNNKQPQPPPPPPPATAQPPPGAPRAAAGLLPGGKAREFNRNQRKDSEGYSESPDLEFEYADTDKWAAELSELYSYTEGPEFLMNRKCFEEDFRIHVTDKKWTELDTNQHRTHAMRLLDGLEVTAREKRLKVARAILYVAQGTFGECSSEAEVQSWMRYNIFLLLEVGTFNALVELLNMEIDNGAACSSAVRKPAISLADSTDLRVLLNIMYLIVETVHQECEGDKAEWSTMRQTFRAELGSPLYNNEPFAIMLFGMVTKFCSGHAPHFPMKKVLLLLWKTVLCTLGGFEELQSMKAEKRSILGLPPLPEDSIKVIRNMRAASPPASASDSIEQQQKRGRREHKALIKQDNLDAFNERDPYKADDSREEEEENDDDNSLEGETFPLERDEVMPPPLQHPQTDRLTCPKGLPWAPKVREKDIEMFLESSRSKFMGYTLGSDTNTVVGLPRPIHESIKTLKQHKYTSIAEVQAQMEEEYLRSPLSGGEEEVEQVPAETLYQGLLPSLPQYMIALLKILLAAAPTSKAKTDSINILADVLPEEMPTTVLQSMKLGVDVNRHKEVIVKAISAVLLLLLKHFKLNHVYQFEYMAQHLVFANCIPLILKFFNQNIMSYITAKNSISVLDYPHCVVHELPELTAESLEAGDSNQFCWRNLFSCINLLRILNKLTKWKHSRTMMLVVFKSAPILKRALKVKQAMMQLYVLKLLKVQTKYLGRQWRKSNMKTMSAIYQKVRHRLNDDWAYGNDLDARPWDFQAEECALRANIERFNARRYDRAHSNPDFLPVDNCLQSVLGQRVDLPEDFQMNYDLWLEREVFSKPISWEELLQ</sequence>
<accession>Q5R7S4</accession>
<accession>Q5NVH6</accession>
<proteinExistence type="evidence at transcript level"/>
<feature type="chain" id="PRO_0000187020" description="Striatin-interacting protein 1">
    <location>
        <begin position="1"/>
        <end position="837"/>
    </location>
</feature>
<feature type="region of interest" description="Disordered" evidence="4">
    <location>
        <begin position="1"/>
        <end position="67"/>
    </location>
</feature>
<feature type="region of interest" description="Disordered" evidence="4">
    <location>
        <begin position="333"/>
        <end position="423"/>
    </location>
</feature>
<feature type="region of interest" description="Required for STRIPAK core complex formation" evidence="2">
    <location>
        <begin position="796"/>
        <end position="837"/>
    </location>
</feature>
<feature type="compositionally biased region" description="Pro residues" evidence="4">
    <location>
        <begin position="18"/>
        <end position="35"/>
    </location>
</feature>
<feature type="compositionally biased region" description="Low complexity" evidence="4">
    <location>
        <begin position="36"/>
        <end position="46"/>
    </location>
</feature>
<feature type="compositionally biased region" description="Basic and acidic residues" evidence="4">
    <location>
        <begin position="47"/>
        <end position="60"/>
    </location>
</feature>
<feature type="compositionally biased region" description="Low complexity" evidence="4">
    <location>
        <begin position="333"/>
        <end position="343"/>
    </location>
</feature>
<feature type="compositionally biased region" description="Basic and acidic residues" evidence="4">
    <location>
        <begin position="356"/>
        <end position="377"/>
    </location>
</feature>
<feature type="compositionally biased region" description="Acidic residues" evidence="4">
    <location>
        <begin position="378"/>
        <end position="391"/>
    </location>
</feature>
<feature type="modified residue" description="N-acetylmethionine" evidence="2">
    <location>
        <position position="1"/>
    </location>
</feature>
<feature type="modified residue" description="Phosphoserine" evidence="2">
    <location>
        <position position="59"/>
    </location>
</feature>
<feature type="modified residue" description="Phosphoserine" evidence="2">
    <location>
        <position position="335"/>
    </location>
</feature>
<feature type="modified residue" description="Phosphoserine" evidence="3">
    <location>
        <position position="339"/>
    </location>
</feature>
<feature type="modified residue" description="Phosphoserine" evidence="2">
    <location>
        <position position="788"/>
    </location>
</feature>
<feature type="splice variant" id="VSP_014943" description="In isoform 1." evidence="5">
    <original>VGTFNALVELLNMEIDNG</original>
    <variation>NS</variation>
    <location>
        <begin position="179"/>
        <end position="196"/>
    </location>
</feature>
<feature type="sequence conflict" description="In Ref. 1; CAH92186." evidence="6" ref="1">
    <original>S</original>
    <variation>L</variation>
    <location>
        <position position="343"/>
    </location>
</feature>
<feature type="sequence conflict" description="In Ref. 1; CAH92186." evidence="6" ref="1">
    <original>M</original>
    <variation>I</variation>
    <location>
        <position position="445"/>
    </location>
</feature>
<keyword id="KW-0007">Acetylation</keyword>
<keyword id="KW-0025">Alternative splicing</keyword>
<keyword id="KW-0963">Cytoplasm</keyword>
<keyword id="KW-0597">Phosphoprotein</keyword>
<keyword id="KW-1185">Reference proteome</keyword>
<comment type="function">
    <text evidence="2">Plays a role in the regulation of cell morphology and cytoskeletal organization. Required in the cortical actin filament dynamics and cell shape. Part of the striatin-interacting phosphatase and kinase (STRIPAK) complexes. STRIPAK complexes have critical roles in protein (de)phosphorylation and are regulators of multiple signaling pathways including Hippo, MAPK, nuclear receptor and cytoskeleton remodeling. Different types of STRIPAK complexes are involved in a variety of biological processes such as cell growth, differentiation, apoptosis, metabolism and immune regulation.</text>
</comment>
<comment type="subunit">
    <text evidence="2 3">Part of the core of STRIPAK complexes composed of PP2A catalytic and scaffolding subunits, the striatins (PP2A regulatory subunits), the striatin-associated proteins MOB4, STRIP1 and STRIP2, PDCD10 and members of the STE20 kinases, such as STK24 and STK26. The STRIPAK complex can be extended by adapter proteins such as SLMAP:SIKE1, CTTNBP2 or CTTNBP2NL. Interacts with CDC42BPB. Interacts with CTTNBP2NL.</text>
</comment>
<comment type="subcellular location">
    <subcellularLocation>
        <location evidence="1">Cytoplasm</location>
    </subcellularLocation>
    <text evidence="1">Enriched on the plasma membrane.</text>
</comment>
<comment type="alternative products">
    <event type="alternative splicing"/>
    <isoform>
        <id>Q5R7S4-1</id>
        <name>2</name>
        <sequence type="displayed"/>
    </isoform>
    <isoform>
        <id>Q5R7S4-2</id>
        <name>1</name>
        <sequence type="described" ref="VSP_014943"/>
    </isoform>
</comment>
<comment type="similarity">
    <text evidence="6">Belongs to the STRIP family.</text>
</comment>
<protein>
    <recommendedName>
        <fullName>Striatin-interacting protein 1</fullName>
    </recommendedName>
    <alternativeName>
        <fullName>Protein FAM40A</fullName>
    </alternativeName>
</protein>
<name>STRP1_PONAB</name>
<dbReference type="EMBL" id="CR860035">
    <property type="protein sequence ID" value="CAH92186.1"/>
    <property type="molecule type" value="Unassigned_RNA"/>
</dbReference>
<dbReference type="EMBL" id="CR926057">
    <property type="protein sequence ID" value="CAI29687.1"/>
    <property type="molecule type" value="mRNA"/>
</dbReference>
<dbReference type="SMR" id="Q5R7S4"/>
<dbReference type="FunCoup" id="Q5R7S4">
    <property type="interactions" value="3812"/>
</dbReference>
<dbReference type="STRING" id="9601.ENSPPYP00000001226"/>
<dbReference type="eggNOG" id="KOG3680">
    <property type="taxonomic scope" value="Eukaryota"/>
</dbReference>
<dbReference type="InParanoid" id="Q5R7S4"/>
<dbReference type="Proteomes" id="UP000001595">
    <property type="component" value="Unplaced"/>
</dbReference>
<dbReference type="GO" id="GO:0005829">
    <property type="term" value="C:cytosol"/>
    <property type="evidence" value="ECO:0007669"/>
    <property type="project" value="TreeGrafter"/>
</dbReference>
<dbReference type="GO" id="GO:0090443">
    <property type="term" value="C:FAR/SIN/STRIPAK complex"/>
    <property type="evidence" value="ECO:0000250"/>
    <property type="project" value="UniProtKB"/>
</dbReference>
<dbReference type="GO" id="GO:0030674">
    <property type="term" value="F:protein-macromolecule adaptor activity"/>
    <property type="evidence" value="ECO:0000250"/>
    <property type="project" value="UniProtKB"/>
</dbReference>
<dbReference type="GO" id="GO:0030866">
    <property type="term" value="P:cortical actin cytoskeleton organization"/>
    <property type="evidence" value="ECO:0000250"/>
    <property type="project" value="UniProtKB"/>
</dbReference>
<dbReference type="GO" id="GO:0035331">
    <property type="term" value="P:negative regulation of hippo signaling"/>
    <property type="evidence" value="ECO:0000250"/>
    <property type="project" value="UniProtKB"/>
</dbReference>
<dbReference type="GO" id="GO:0022604">
    <property type="term" value="P:regulation of cell morphogenesis"/>
    <property type="evidence" value="ECO:0000250"/>
    <property type="project" value="UniProtKB"/>
</dbReference>
<dbReference type="InterPro" id="IPR040185">
    <property type="entry name" value="Far11/STRP"/>
</dbReference>
<dbReference type="InterPro" id="IPR021819">
    <property type="entry name" value="Far11/STRP_C"/>
</dbReference>
<dbReference type="InterPro" id="IPR012486">
    <property type="entry name" value="Far11/STRP_N"/>
</dbReference>
<dbReference type="PANTHER" id="PTHR13239">
    <property type="entry name" value="PROTEIN REQUIRED FOR HYPHAL ANASTOMOSIS HAM-2"/>
    <property type="match status" value="1"/>
</dbReference>
<dbReference type="PANTHER" id="PTHR13239:SF7">
    <property type="entry name" value="STRIATIN-INTERACTING PROTEIN 1"/>
    <property type="match status" value="1"/>
</dbReference>
<dbReference type="Pfam" id="PF11882">
    <property type="entry name" value="DUF3402"/>
    <property type="match status" value="2"/>
</dbReference>
<dbReference type="Pfam" id="PF07923">
    <property type="entry name" value="N1221"/>
    <property type="match status" value="1"/>
</dbReference>
<dbReference type="SMART" id="SM01293">
    <property type="entry name" value="DUF3402"/>
    <property type="match status" value="1"/>
</dbReference>
<dbReference type="SMART" id="SM01292">
    <property type="entry name" value="N1221"/>
    <property type="match status" value="1"/>
</dbReference>
<evidence type="ECO:0000250" key="1"/>
<evidence type="ECO:0000250" key="2">
    <source>
        <dbReference type="UniProtKB" id="Q5VSL9"/>
    </source>
</evidence>
<evidence type="ECO:0000250" key="3">
    <source>
        <dbReference type="UniProtKB" id="Q8C079"/>
    </source>
</evidence>
<evidence type="ECO:0000256" key="4">
    <source>
        <dbReference type="SAM" id="MobiDB-lite"/>
    </source>
</evidence>
<evidence type="ECO:0000303" key="5">
    <source ref="1"/>
</evidence>
<evidence type="ECO:0000305" key="6"/>
<reference key="1">
    <citation type="submission" date="2004-11" db="EMBL/GenBank/DDBJ databases">
        <authorList>
            <consortium name="The German cDNA consortium"/>
        </authorList>
    </citation>
    <scope>NUCLEOTIDE SEQUENCE [LARGE SCALE MRNA] (ISOFORM 1)</scope>
    <scope>NUCLEOTIDE SEQUENCE [LARGE SCALE MRNA] OF 46-837 (ISOFORM 2)</scope>
    <source>
        <tissue>Brain cortex</tissue>
    </source>
</reference>
<organism>
    <name type="scientific">Pongo abelii</name>
    <name type="common">Sumatran orangutan</name>
    <name type="synonym">Pongo pygmaeus abelii</name>
    <dbReference type="NCBI Taxonomy" id="9601"/>
    <lineage>
        <taxon>Eukaryota</taxon>
        <taxon>Metazoa</taxon>
        <taxon>Chordata</taxon>
        <taxon>Craniata</taxon>
        <taxon>Vertebrata</taxon>
        <taxon>Euteleostomi</taxon>
        <taxon>Mammalia</taxon>
        <taxon>Eutheria</taxon>
        <taxon>Euarchontoglires</taxon>
        <taxon>Primates</taxon>
        <taxon>Haplorrhini</taxon>
        <taxon>Catarrhini</taxon>
        <taxon>Hominidae</taxon>
        <taxon>Pongo</taxon>
    </lineage>
</organism>
<gene>
    <name type="primary">STRIP1</name>
    <name type="synonym">FAM40A</name>
</gene>